<accession>A9N744</accession>
<sequence>MTGKKRSASSSRWLQEHFSDKYVQQAQKKGLRSRAWFKLDEIQQSDKLFKPGMTVVDLGAAPGGWSQYVVTQIGGKGRIIACDLLPMDPIVGVDFLQGDFRDELVMKALLERVGDSKVQVVMSDMAPNMSGTPAVDIPRAMYLVELALEMCRDVLAPGGSFVVKVFQGEGFDEYLREIRSLFTKVKVRKPDSSRARSREVYIVATGRK</sequence>
<feature type="chain" id="PRO_1000087710" description="Ribosomal RNA large subunit methyltransferase E">
    <location>
        <begin position="1"/>
        <end position="208"/>
    </location>
</feature>
<feature type="active site" description="Proton acceptor" evidence="1">
    <location>
        <position position="164"/>
    </location>
</feature>
<feature type="binding site" evidence="1">
    <location>
        <position position="63"/>
    </location>
    <ligand>
        <name>S-adenosyl-L-methionine</name>
        <dbReference type="ChEBI" id="CHEBI:59789"/>
    </ligand>
</feature>
<feature type="binding site" evidence="1">
    <location>
        <position position="65"/>
    </location>
    <ligand>
        <name>S-adenosyl-L-methionine</name>
        <dbReference type="ChEBI" id="CHEBI:59789"/>
    </ligand>
</feature>
<feature type="binding site" evidence="1">
    <location>
        <position position="83"/>
    </location>
    <ligand>
        <name>S-adenosyl-L-methionine</name>
        <dbReference type="ChEBI" id="CHEBI:59789"/>
    </ligand>
</feature>
<feature type="binding site" evidence="1">
    <location>
        <position position="99"/>
    </location>
    <ligand>
        <name>S-adenosyl-L-methionine</name>
        <dbReference type="ChEBI" id="CHEBI:59789"/>
    </ligand>
</feature>
<feature type="binding site" evidence="1">
    <location>
        <position position="124"/>
    </location>
    <ligand>
        <name>S-adenosyl-L-methionine</name>
        <dbReference type="ChEBI" id="CHEBI:59789"/>
    </ligand>
</feature>
<evidence type="ECO:0000255" key="1">
    <source>
        <dbReference type="HAMAP-Rule" id="MF_01547"/>
    </source>
</evidence>
<name>RLME_SALPB</name>
<reference key="1">
    <citation type="submission" date="2007-11" db="EMBL/GenBank/DDBJ databases">
        <authorList>
            <consortium name="The Salmonella enterica serovar Paratyphi B Genome Sequencing Project"/>
            <person name="McClelland M."/>
            <person name="Sanderson E.K."/>
            <person name="Porwollik S."/>
            <person name="Spieth J."/>
            <person name="Clifton W.S."/>
            <person name="Fulton R."/>
            <person name="Cordes M."/>
            <person name="Wollam A."/>
            <person name="Shah N."/>
            <person name="Pepin K."/>
            <person name="Bhonagiri V."/>
            <person name="Nash W."/>
            <person name="Johnson M."/>
            <person name="Thiruvilangam P."/>
            <person name="Wilson R."/>
        </authorList>
    </citation>
    <scope>NUCLEOTIDE SEQUENCE [LARGE SCALE GENOMIC DNA]</scope>
    <source>
        <strain>ATCC BAA-1250 / SPB7</strain>
    </source>
</reference>
<protein>
    <recommendedName>
        <fullName evidence="1">Ribosomal RNA large subunit methyltransferase E</fullName>
        <ecNumber evidence="1">2.1.1.166</ecNumber>
    </recommendedName>
    <alternativeName>
        <fullName evidence="1">23S rRNA Um2552 methyltransferase</fullName>
    </alternativeName>
    <alternativeName>
        <fullName evidence="1">rRNA (uridine-2'-O-)-methyltransferase</fullName>
    </alternativeName>
</protein>
<comment type="function">
    <text evidence="1">Specifically methylates the uridine in position 2552 of 23S rRNA at the 2'-O position of the ribose in the fully assembled 50S ribosomal subunit.</text>
</comment>
<comment type="catalytic activity">
    <reaction evidence="1">
        <text>uridine(2552) in 23S rRNA + S-adenosyl-L-methionine = 2'-O-methyluridine(2552) in 23S rRNA + S-adenosyl-L-homocysteine + H(+)</text>
        <dbReference type="Rhea" id="RHEA:42720"/>
        <dbReference type="Rhea" id="RHEA-COMP:10202"/>
        <dbReference type="Rhea" id="RHEA-COMP:10203"/>
        <dbReference type="ChEBI" id="CHEBI:15378"/>
        <dbReference type="ChEBI" id="CHEBI:57856"/>
        <dbReference type="ChEBI" id="CHEBI:59789"/>
        <dbReference type="ChEBI" id="CHEBI:65315"/>
        <dbReference type="ChEBI" id="CHEBI:74478"/>
        <dbReference type="EC" id="2.1.1.166"/>
    </reaction>
</comment>
<comment type="subcellular location">
    <subcellularLocation>
        <location evidence="1">Cytoplasm</location>
    </subcellularLocation>
</comment>
<comment type="similarity">
    <text evidence="1">Belongs to the class I-like SAM-binding methyltransferase superfamily. RNA methyltransferase RlmE family.</text>
</comment>
<organism>
    <name type="scientific">Salmonella paratyphi B (strain ATCC BAA-1250 / SPB7)</name>
    <dbReference type="NCBI Taxonomy" id="1016998"/>
    <lineage>
        <taxon>Bacteria</taxon>
        <taxon>Pseudomonadati</taxon>
        <taxon>Pseudomonadota</taxon>
        <taxon>Gammaproteobacteria</taxon>
        <taxon>Enterobacterales</taxon>
        <taxon>Enterobacteriaceae</taxon>
        <taxon>Salmonella</taxon>
    </lineage>
</organism>
<gene>
    <name evidence="1" type="primary">rlmE</name>
    <name evidence="1" type="synonym">ftsJ</name>
    <name evidence="1" type="synonym">rrmJ</name>
    <name type="ordered locus">SPAB_04112</name>
</gene>
<proteinExistence type="inferred from homology"/>
<keyword id="KW-0963">Cytoplasm</keyword>
<keyword id="KW-0489">Methyltransferase</keyword>
<keyword id="KW-0698">rRNA processing</keyword>
<keyword id="KW-0949">S-adenosyl-L-methionine</keyword>
<keyword id="KW-0808">Transferase</keyword>
<dbReference type="EC" id="2.1.1.166" evidence="1"/>
<dbReference type="EMBL" id="CP000886">
    <property type="protein sequence ID" value="ABX69436.1"/>
    <property type="molecule type" value="Genomic_DNA"/>
</dbReference>
<dbReference type="RefSeq" id="WP_000145974.1">
    <property type="nucleotide sequence ID" value="NC_010102.1"/>
</dbReference>
<dbReference type="SMR" id="A9N744"/>
<dbReference type="KEGG" id="spq:SPAB_04112"/>
<dbReference type="PATRIC" id="fig|1016998.12.peg.3872"/>
<dbReference type="HOGENOM" id="CLU_009422_4_0_6"/>
<dbReference type="BioCyc" id="SENT1016998:SPAB_RS16705-MONOMER"/>
<dbReference type="Proteomes" id="UP000008556">
    <property type="component" value="Chromosome"/>
</dbReference>
<dbReference type="GO" id="GO:0005737">
    <property type="term" value="C:cytoplasm"/>
    <property type="evidence" value="ECO:0007669"/>
    <property type="project" value="UniProtKB-SubCell"/>
</dbReference>
<dbReference type="GO" id="GO:0008650">
    <property type="term" value="F:rRNA (uridine-2'-O-)-methyltransferase activity"/>
    <property type="evidence" value="ECO:0007669"/>
    <property type="project" value="UniProtKB-UniRule"/>
</dbReference>
<dbReference type="CDD" id="cd02440">
    <property type="entry name" value="AdoMet_MTases"/>
    <property type="match status" value="1"/>
</dbReference>
<dbReference type="FunFam" id="3.40.50.150:FF:000005">
    <property type="entry name" value="Ribosomal RNA large subunit methyltransferase E"/>
    <property type="match status" value="1"/>
</dbReference>
<dbReference type="Gene3D" id="3.40.50.150">
    <property type="entry name" value="Vaccinia Virus protein VP39"/>
    <property type="match status" value="1"/>
</dbReference>
<dbReference type="HAMAP" id="MF_01547">
    <property type="entry name" value="RNA_methyltr_E"/>
    <property type="match status" value="1"/>
</dbReference>
<dbReference type="InterPro" id="IPR050082">
    <property type="entry name" value="RNA_methyltr_RlmE"/>
</dbReference>
<dbReference type="InterPro" id="IPR002877">
    <property type="entry name" value="RNA_MeTrfase_FtsJ_dom"/>
</dbReference>
<dbReference type="InterPro" id="IPR015507">
    <property type="entry name" value="rRNA-MeTfrase_E"/>
</dbReference>
<dbReference type="InterPro" id="IPR004512">
    <property type="entry name" value="rRNA_MeTrfase_gammaproteobac"/>
</dbReference>
<dbReference type="InterPro" id="IPR029063">
    <property type="entry name" value="SAM-dependent_MTases_sf"/>
</dbReference>
<dbReference type="NCBIfam" id="NF008390">
    <property type="entry name" value="PRK11188.1"/>
    <property type="match status" value="1"/>
</dbReference>
<dbReference type="NCBIfam" id="TIGR00438">
    <property type="entry name" value="rrmJ"/>
    <property type="match status" value="1"/>
</dbReference>
<dbReference type="PANTHER" id="PTHR10920">
    <property type="entry name" value="RIBOSOMAL RNA METHYLTRANSFERASE"/>
    <property type="match status" value="1"/>
</dbReference>
<dbReference type="PANTHER" id="PTHR10920:SF18">
    <property type="entry name" value="RRNA METHYLTRANSFERASE 2, MITOCHONDRIAL"/>
    <property type="match status" value="1"/>
</dbReference>
<dbReference type="Pfam" id="PF01728">
    <property type="entry name" value="FtsJ"/>
    <property type="match status" value="1"/>
</dbReference>
<dbReference type="PIRSF" id="PIRSF005461">
    <property type="entry name" value="23S_rRNA_mtase"/>
    <property type="match status" value="1"/>
</dbReference>
<dbReference type="SUPFAM" id="SSF53335">
    <property type="entry name" value="S-adenosyl-L-methionine-dependent methyltransferases"/>
    <property type="match status" value="1"/>
</dbReference>